<comment type="function">
    <text evidence="1">Part of the ABC transporter complex SsuABC involved in aliphatic sulfonates import. Responsible for energy coupling to the transport system.</text>
</comment>
<comment type="catalytic activity">
    <reaction evidence="1">
        <text>ATP + H2O + aliphatic sulfonate-[sulfonate-binding protein]Side 1 = ADP + phosphate + aliphatic sulfonateSide 2 + [sulfonate-binding protein]Side 1.</text>
        <dbReference type="EC" id="7.6.2.14"/>
    </reaction>
</comment>
<comment type="subunit">
    <text evidence="1">The complex is composed of two ATP-binding proteins (SsuB), two transmembrane proteins (SsuC) and a solute-binding protein (SsuA).</text>
</comment>
<comment type="subcellular location">
    <subcellularLocation>
        <location evidence="1">Cell inner membrane</location>
        <topology evidence="1">Peripheral membrane protein</topology>
    </subcellularLocation>
</comment>
<comment type="similarity">
    <text evidence="1">Belongs to the ABC transporter superfamily. Aliphatic sulfonates importer (TC 3.A.1.17.2) family.</text>
</comment>
<comment type="sequence caution" evidence="3">
    <conflict type="erroneous initiation">
        <sequence resource="EMBL-CDS" id="ABE30482"/>
    </conflict>
</comment>
<name>SSUB1_PARXL</name>
<organism>
    <name type="scientific">Paraburkholderia xenovorans (strain LB400)</name>
    <dbReference type="NCBI Taxonomy" id="266265"/>
    <lineage>
        <taxon>Bacteria</taxon>
        <taxon>Pseudomonadati</taxon>
        <taxon>Pseudomonadota</taxon>
        <taxon>Betaproteobacteria</taxon>
        <taxon>Burkholderiales</taxon>
        <taxon>Burkholderiaceae</taxon>
        <taxon>Paraburkholderia</taxon>
    </lineage>
</organism>
<evidence type="ECO:0000255" key="1">
    <source>
        <dbReference type="HAMAP-Rule" id="MF_01724"/>
    </source>
</evidence>
<evidence type="ECO:0000256" key="2">
    <source>
        <dbReference type="SAM" id="MobiDB-lite"/>
    </source>
</evidence>
<evidence type="ECO:0000305" key="3"/>
<sequence>MSATTWSASFGGIAGSDLEAELAQARTVDHDANEAADLEHAEATHHHARVAAQGHARGDAQPPAGALARDDGRRAADYSVQLRGVGKRYGEREVLSGFDLSIERGSFVAIVGRSGCGKSTLLRLVAGLEKATSGVLEKRNEEGGPLDTRIMFQDARLLPWKSVLQNVMLGLGRSAREDARAVLAEVGLLERANDWPAQLSGGQRQRVALARALVHRPQLLLLDEPLGALDALTRIEMHALIERLWREHRFTALLVTHDVHEAVALGDRILLIEEGRIALDQPVPLARPRARASAGFAALEEHVLQRVLKTAPNDDALSDGAYDARDEGRARRPTDVRWAV</sequence>
<keyword id="KW-0067">ATP-binding</keyword>
<keyword id="KW-0997">Cell inner membrane</keyword>
<keyword id="KW-1003">Cell membrane</keyword>
<keyword id="KW-0472">Membrane</keyword>
<keyword id="KW-0547">Nucleotide-binding</keyword>
<keyword id="KW-1185">Reference proteome</keyword>
<keyword id="KW-1278">Translocase</keyword>
<keyword id="KW-0813">Transport</keyword>
<feature type="chain" id="PRO_0000279906" description="Aliphatic sulfonates import ATP-binding protein SsuB 1">
    <location>
        <begin position="1"/>
        <end position="340"/>
    </location>
</feature>
<feature type="domain" description="ABC transporter" evidence="1">
    <location>
        <begin position="80"/>
        <end position="299"/>
    </location>
</feature>
<feature type="region of interest" description="Disordered" evidence="2">
    <location>
        <begin position="44"/>
        <end position="72"/>
    </location>
</feature>
<feature type="binding site" evidence="1">
    <location>
        <begin position="112"/>
        <end position="119"/>
    </location>
    <ligand>
        <name>ATP</name>
        <dbReference type="ChEBI" id="CHEBI:30616"/>
    </ligand>
</feature>
<protein>
    <recommendedName>
        <fullName evidence="1">Aliphatic sulfonates import ATP-binding protein SsuB 1</fullName>
        <ecNumber evidence="1">7.6.2.14</ecNumber>
    </recommendedName>
</protein>
<dbReference type="EC" id="7.6.2.14" evidence="1"/>
<dbReference type="EMBL" id="CP000270">
    <property type="protein sequence ID" value="ABE30482.1"/>
    <property type="status" value="ALT_INIT"/>
    <property type="molecule type" value="Genomic_DNA"/>
</dbReference>
<dbReference type="RefSeq" id="WP_038456285.1">
    <property type="nucleotide sequence ID" value="NC_007951.1"/>
</dbReference>
<dbReference type="SMR" id="Q13ZK7"/>
<dbReference type="STRING" id="266265.Bxe_A2491"/>
<dbReference type="KEGG" id="bxb:DR64_184"/>
<dbReference type="KEGG" id="bxe:Bxe_A2491"/>
<dbReference type="eggNOG" id="COG1116">
    <property type="taxonomic scope" value="Bacteria"/>
</dbReference>
<dbReference type="OrthoDB" id="9783039at2"/>
<dbReference type="Proteomes" id="UP000001817">
    <property type="component" value="Chromosome 1"/>
</dbReference>
<dbReference type="GO" id="GO:0005886">
    <property type="term" value="C:plasma membrane"/>
    <property type="evidence" value="ECO:0007669"/>
    <property type="project" value="UniProtKB-SubCell"/>
</dbReference>
<dbReference type="GO" id="GO:0005524">
    <property type="term" value="F:ATP binding"/>
    <property type="evidence" value="ECO:0007669"/>
    <property type="project" value="UniProtKB-KW"/>
</dbReference>
<dbReference type="GO" id="GO:0016887">
    <property type="term" value="F:ATP hydrolysis activity"/>
    <property type="evidence" value="ECO:0007669"/>
    <property type="project" value="InterPro"/>
</dbReference>
<dbReference type="CDD" id="cd03293">
    <property type="entry name" value="ABC_NrtD_SsuB_transporters"/>
    <property type="match status" value="1"/>
</dbReference>
<dbReference type="Gene3D" id="3.40.50.300">
    <property type="entry name" value="P-loop containing nucleotide triphosphate hydrolases"/>
    <property type="match status" value="1"/>
</dbReference>
<dbReference type="InterPro" id="IPR003593">
    <property type="entry name" value="AAA+_ATPase"/>
</dbReference>
<dbReference type="InterPro" id="IPR003439">
    <property type="entry name" value="ABC_transporter-like_ATP-bd"/>
</dbReference>
<dbReference type="InterPro" id="IPR017871">
    <property type="entry name" value="ABC_transporter-like_CS"/>
</dbReference>
<dbReference type="InterPro" id="IPR050166">
    <property type="entry name" value="ABC_transporter_ATP-bind"/>
</dbReference>
<dbReference type="InterPro" id="IPR027417">
    <property type="entry name" value="P-loop_NTPase"/>
</dbReference>
<dbReference type="PANTHER" id="PTHR42788:SF17">
    <property type="entry name" value="ALIPHATIC SULFONATES IMPORT ATP-BINDING PROTEIN SSUB"/>
    <property type="match status" value="1"/>
</dbReference>
<dbReference type="PANTHER" id="PTHR42788">
    <property type="entry name" value="TAURINE IMPORT ATP-BINDING PROTEIN-RELATED"/>
    <property type="match status" value="1"/>
</dbReference>
<dbReference type="Pfam" id="PF00005">
    <property type="entry name" value="ABC_tran"/>
    <property type="match status" value="1"/>
</dbReference>
<dbReference type="SMART" id="SM00382">
    <property type="entry name" value="AAA"/>
    <property type="match status" value="1"/>
</dbReference>
<dbReference type="SUPFAM" id="SSF52540">
    <property type="entry name" value="P-loop containing nucleoside triphosphate hydrolases"/>
    <property type="match status" value="1"/>
</dbReference>
<dbReference type="PROSITE" id="PS00211">
    <property type="entry name" value="ABC_TRANSPORTER_1"/>
    <property type="match status" value="1"/>
</dbReference>
<dbReference type="PROSITE" id="PS50893">
    <property type="entry name" value="ABC_TRANSPORTER_2"/>
    <property type="match status" value="1"/>
</dbReference>
<dbReference type="PROSITE" id="PS51291">
    <property type="entry name" value="SSUB"/>
    <property type="match status" value="1"/>
</dbReference>
<reference key="1">
    <citation type="journal article" date="2006" name="Proc. Natl. Acad. Sci. U.S.A.">
        <title>Burkholderia xenovorans LB400 harbors a multi-replicon, 9.73-Mbp genome shaped for versatility.</title>
        <authorList>
            <person name="Chain P.S.G."/>
            <person name="Denef V.J."/>
            <person name="Konstantinidis K.T."/>
            <person name="Vergez L.M."/>
            <person name="Agullo L."/>
            <person name="Reyes V.L."/>
            <person name="Hauser L."/>
            <person name="Cordova M."/>
            <person name="Gomez L."/>
            <person name="Gonzalez M."/>
            <person name="Land M."/>
            <person name="Lao V."/>
            <person name="Larimer F."/>
            <person name="LiPuma J.J."/>
            <person name="Mahenthiralingam E."/>
            <person name="Malfatti S.A."/>
            <person name="Marx C.J."/>
            <person name="Parnell J.J."/>
            <person name="Ramette A."/>
            <person name="Richardson P."/>
            <person name="Seeger M."/>
            <person name="Smith D."/>
            <person name="Spilker T."/>
            <person name="Sul W.J."/>
            <person name="Tsoi T.V."/>
            <person name="Ulrich L.E."/>
            <person name="Zhulin I.B."/>
            <person name="Tiedje J.M."/>
        </authorList>
    </citation>
    <scope>NUCLEOTIDE SEQUENCE [LARGE SCALE GENOMIC DNA]</scope>
    <source>
        <strain>LB400</strain>
    </source>
</reference>
<accession>Q13ZK7</accession>
<proteinExistence type="inferred from homology"/>
<gene>
    <name evidence="1" type="primary">ssuB1</name>
    <name type="ordered locus">Bxeno_A1944</name>
    <name type="ORF">Bxe_A2491</name>
</gene>